<accession>A7ND08</accession>
<dbReference type="EC" id="6.3.4.2" evidence="1"/>
<dbReference type="EMBL" id="CP000803">
    <property type="protein sequence ID" value="ABU61861.1"/>
    <property type="molecule type" value="Genomic_DNA"/>
</dbReference>
<dbReference type="RefSeq" id="WP_003016498.1">
    <property type="nucleotide sequence ID" value="NC_009749.1"/>
</dbReference>
<dbReference type="SMR" id="A7ND08"/>
<dbReference type="MEROPS" id="C26.964"/>
<dbReference type="KEGG" id="fta:FTA_1386"/>
<dbReference type="HOGENOM" id="CLU_011675_5_0_6"/>
<dbReference type="UniPathway" id="UPA00159">
    <property type="reaction ID" value="UER00277"/>
</dbReference>
<dbReference type="GO" id="GO:0005829">
    <property type="term" value="C:cytosol"/>
    <property type="evidence" value="ECO:0007669"/>
    <property type="project" value="TreeGrafter"/>
</dbReference>
<dbReference type="GO" id="GO:0005524">
    <property type="term" value="F:ATP binding"/>
    <property type="evidence" value="ECO:0007669"/>
    <property type="project" value="UniProtKB-KW"/>
</dbReference>
<dbReference type="GO" id="GO:0003883">
    <property type="term" value="F:CTP synthase activity"/>
    <property type="evidence" value="ECO:0007669"/>
    <property type="project" value="UniProtKB-UniRule"/>
</dbReference>
<dbReference type="GO" id="GO:0004359">
    <property type="term" value="F:glutaminase activity"/>
    <property type="evidence" value="ECO:0007669"/>
    <property type="project" value="RHEA"/>
</dbReference>
<dbReference type="GO" id="GO:0042802">
    <property type="term" value="F:identical protein binding"/>
    <property type="evidence" value="ECO:0007669"/>
    <property type="project" value="TreeGrafter"/>
</dbReference>
<dbReference type="GO" id="GO:0046872">
    <property type="term" value="F:metal ion binding"/>
    <property type="evidence" value="ECO:0007669"/>
    <property type="project" value="UniProtKB-KW"/>
</dbReference>
<dbReference type="GO" id="GO:0044210">
    <property type="term" value="P:'de novo' CTP biosynthetic process"/>
    <property type="evidence" value="ECO:0007669"/>
    <property type="project" value="UniProtKB-UniRule"/>
</dbReference>
<dbReference type="GO" id="GO:0019856">
    <property type="term" value="P:pyrimidine nucleobase biosynthetic process"/>
    <property type="evidence" value="ECO:0007669"/>
    <property type="project" value="TreeGrafter"/>
</dbReference>
<dbReference type="CDD" id="cd03113">
    <property type="entry name" value="CTPS_N"/>
    <property type="match status" value="1"/>
</dbReference>
<dbReference type="CDD" id="cd01746">
    <property type="entry name" value="GATase1_CTP_Synthase"/>
    <property type="match status" value="1"/>
</dbReference>
<dbReference type="FunFam" id="3.40.50.300:FF:000009">
    <property type="entry name" value="CTP synthase"/>
    <property type="match status" value="1"/>
</dbReference>
<dbReference type="FunFam" id="3.40.50.880:FF:000002">
    <property type="entry name" value="CTP synthase"/>
    <property type="match status" value="1"/>
</dbReference>
<dbReference type="Gene3D" id="3.40.50.880">
    <property type="match status" value="1"/>
</dbReference>
<dbReference type="Gene3D" id="3.40.50.300">
    <property type="entry name" value="P-loop containing nucleotide triphosphate hydrolases"/>
    <property type="match status" value="1"/>
</dbReference>
<dbReference type="HAMAP" id="MF_01227">
    <property type="entry name" value="PyrG"/>
    <property type="match status" value="1"/>
</dbReference>
<dbReference type="InterPro" id="IPR029062">
    <property type="entry name" value="Class_I_gatase-like"/>
</dbReference>
<dbReference type="InterPro" id="IPR004468">
    <property type="entry name" value="CTP_synthase"/>
</dbReference>
<dbReference type="InterPro" id="IPR017456">
    <property type="entry name" value="CTP_synthase_N"/>
</dbReference>
<dbReference type="InterPro" id="IPR017926">
    <property type="entry name" value="GATASE"/>
</dbReference>
<dbReference type="InterPro" id="IPR033828">
    <property type="entry name" value="GATase1_CTP_Synthase"/>
</dbReference>
<dbReference type="InterPro" id="IPR027417">
    <property type="entry name" value="P-loop_NTPase"/>
</dbReference>
<dbReference type="NCBIfam" id="NF003792">
    <property type="entry name" value="PRK05380.1"/>
    <property type="match status" value="1"/>
</dbReference>
<dbReference type="NCBIfam" id="TIGR00337">
    <property type="entry name" value="PyrG"/>
    <property type="match status" value="1"/>
</dbReference>
<dbReference type="PANTHER" id="PTHR11550">
    <property type="entry name" value="CTP SYNTHASE"/>
    <property type="match status" value="1"/>
</dbReference>
<dbReference type="PANTHER" id="PTHR11550:SF0">
    <property type="entry name" value="CTP SYNTHASE-RELATED"/>
    <property type="match status" value="1"/>
</dbReference>
<dbReference type="Pfam" id="PF06418">
    <property type="entry name" value="CTP_synth_N"/>
    <property type="match status" value="1"/>
</dbReference>
<dbReference type="Pfam" id="PF00117">
    <property type="entry name" value="GATase"/>
    <property type="match status" value="1"/>
</dbReference>
<dbReference type="SUPFAM" id="SSF52317">
    <property type="entry name" value="Class I glutamine amidotransferase-like"/>
    <property type="match status" value="1"/>
</dbReference>
<dbReference type="SUPFAM" id="SSF52540">
    <property type="entry name" value="P-loop containing nucleoside triphosphate hydrolases"/>
    <property type="match status" value="1"/>
</dbReference>
<dbReference type="PROSITE" id="PS51273">
    <property type="entry name" value="GATASE_TYPE_1"/>
    <property type="match status" value="1"/>
</dbReference>
<feature type="chain" id="PRO_1000139459" description="CTP synthase">
    <location>
        <begin position="1"/>
        <end position="546"/>
    </location>
</feature>
<feature type="domain" description="Glutamine amidotransferase type-1" evidence="1">
    <location>
        <begin position="294"/>
        <end position="546"/>
    </location>
</feature>
<feature type="region of interest" description="Amidoligase domain" evidence="1">
    <location>
        <begin position="1"/>
        <end position="269"/>
    </location>
</feature>
<feature type="active site" description="Nucleophile; for glutamine hydrolysis" evidence="1">
    <location>
        <position position="383"/>
    </location>
</feature>
<feature type="active site" evidence="1">
    <location>
        <position position="519"/>
    </location>
</feature>
<feature type="active site" evidence="1">
    <location>
        <position position="521"/>
    </location>
</feature>
<feature type="binding site" evidence="1">
    <location>
        <position position="16"/>
    </location>
    <ligand>
        <name>CTP</name>
        <dbReference type="ChEBI" id="CHEBI:37563"/>
        <note>allosteric inhibitor</note>
    </ligand>
</feature>
<feature type="binding site" evidence="1">
    <location>
        <position position="16"/>
    </location>
    <ligand>
        <name>UTP</name>
        <dbReference type="ChEBI" id="CHEBI:46398"/>
    </ligand>
</feature>
<feature type="binding site" evidence="1">
    <location>
        <begin position="17"/>
        <end position="22"/>
    </location>
    <ligand>
        <name>ATP</name>
        <dbReference type="ChEBI" id="CHEBI:30616"/>
    </ligand>
</feature>
<feature type="binding site" evidence="1">
    <location>
        <position position="74"/>
    </location>
    <ligand>
        <name>ATP</name>
        <dbReference type="ChEBI" id="CHEBI:30616"/>
    </ligand>
</feature>
<feature type="binding site" evidence="1">
    <location>
        <position position="74"/>
    </location>
    <ligand>
        <name>Mg(2+)</name>
        <dbReference type="ChEBI" id="CHEBI:18420"/>
    </ligand>
</feature>
<feature type="binding site" evidence="1">
    <location>
        <position position="143"/>
    </location>
    <ligand>
        <name>Mg(2+)</name>
        <dbReference type="ChEBI" id="CHEBI:18420"/>
    </ligand>
</feature>
<feature type="binding site" evidence="1">
    <location>
        <begin position="150"/>
        <end position="152"/>
    </location>
    <ligand>
        <name>CTP</name>
        <dbReference type="ChEBI" id="CHEBI:37563"/>
        <note>allosteric inhibitor</note>
    </ligand>
</feature>
<feature type="binding site" evidence="1">
    <location>
        <begin position="190"/>
        <end position="195"/>
    </location>
    <ligand>
        <name>CTP</name>
        <dbReference type="ChEBI" id="CHEBI:37563"/>
        <note>allosteric inhibitor</note>
    </ligand>
</feature>
<feature type="binding site" evidence="1">
    <location>
        <begin position="190"/>
        <end position="195"/>
    </location>
    <ligand>
        <name>UTP</name>
        <dbReference type="ChEBI" id="CHEBI:46398"/>
    </ligand>
</feature>
<feature type="binding site" evidence="1">
    <location>
        <position position="226"/>
    </location>
    <ligand>
        <name>CTP</name>
        <dbReference type="ChEBI" id="CHEBI:37563"/>
        <note>allosteric inhibitor</note>
    </ligand>
</feature>
<feature type="binding site" evidence="1">
    <location>
        <position position="226"/>
    </location>
    <ligand>
        <name>UTP</name>
        <dbReference type="ChEBI" id="CHEBI:46398"/>
    </ligand>
</feature>
<feature type="binding site" evidence="1">
    <location>
        <position position="356"/>
    </location>
    <ligand>
        <name>L-glutamine</name>
        <dbReference type="ChEBI" id="CHEBI:58359"/>
    </ligand>
</feature>
<feature type="binding site" evidence="1">
    <location>
        <begin position="384"/>
        <end position="387"/>
    </location>
    <ligand>
        <name>L-glutamine</name>
        <dbReference type="ChEBI" id="CHEBI:58359"/>
    </ligand>
</feature>
<feature type="binding site" evidence="1">
    <location>
        <position position="407"/>
    </location>
    <ligand>
        <name>L-glutamine</name>
        <dbReference type="ChEBI" id="CHEBI:58359"/>
    </ligand>
</feature>
<feature type="binding site" evidence="1">
    <location>
        <position position="474"/>
    </location>
    <ligand>
        <name>L-glutamine</name>
        <dbReference type="ChEBI" id="CHEBI:58359"/>
    </ligand>
</feature>
<sequence>MNSNTKIIFVTGGVVSSLGKGVTAASLATLLESRGLNVTMMKLDPYINVDPGTMSPLQHGEVFVTEDGAETDLDLGHYERFIRNKMTQANNFTTGKVYQSVLRRERKGDYLGATIQVIPHITDEIKRRICSGIADDVDVAIVEIGGTVGDIESQPFLEAIRQLRIELGRNRTLFVHLTLLPYIKVAGEIKTKPTQHSVKELRGIGIQADVLVCRCEKKFDDSEKRKIALFTNVDQDCIFTAEDVDTIYEVPLKYNQQGFDAKLVELLNLNAKEADLSEWQNVVNTIRDVKGEVIIAMVGKYVSLTEAYKSLNEALYNAGYKKGVKVKIKFVDSEDVNENNVESYFKDVAAILVPGGFGSRGVEGKIISIKYARENQIPFLGICLGMQLAVIEYARNILGIKDAHSSELEPTTANPVIGLITEWQAEDGTVHQRTHSSDLGGTMRLGGYKCVLKQGSRAREIYQADEVVERHRHRYEVNSNYVERLEEAGLIFSGRSEDNKLMELIEIPQHKWFIACQAHPEFTSTPRYGHKLFESYIQAAIENSNN</sequence>
<reference key="1">
    <citation type="journal article" date="2009" name="PLoS ONE">
        <title>Complete genome sequence of Francisella tularensis subspecies holarctica FTNF002-00.</title>
        <authorList>
            <person name="Barabote R.D."/>
            <person name="Xie G."/>
            <person name="Brettin T.S."/>
            <person name="Hinrichs S.H."/>
            <person name="Fey P.D."/>
            <person name="Jay J.J."/>
            <person name="Engle J.L."/>
            <person name="Godbole S.D."/>
            <person name="Noronha J.M."/>
            <person name="Scheuermann R.H."/>
            <person name="Zhou L.W."/>
            <person name="Lion C."/>
            <person name="Dempsey M.P."/>
        </authorList>
    </citation>
    <scope>NUCLEOTIDE SEQUENCE [LARGE SCALE GENOMIC DNA]</scope>
    <source>
        <strain>FTNF002-00 / FTA</strain>
    </source>
</reference>
<protein>
    <recommendedName>
        <fullName evidence="1">CTP synthase</fullName>
        <ecNumber evidence="1">6.3.4.2</ecNumber>
    </recommendedName>
    <alternativeName>
        <fullName evidence="1">Cytidine 5'-triphosphate synthase</fullName>
    </alternativeName>
    <alternativeName>
        <fullName evidence="1">Cytidine triphosphate synthetase</fullName>
        <shortName evidence="1">CTP synthetase</shortName>
        <shortName evidence="1">CTPS</shortName>
    </alternativeName>
    <alternativeName>
        <fullName evidence="1">UTP--ammonia ligase</fullName>
    </alternativeName>
</protein>
<name>PYRG_FRATF</name>
<keyword id="KW-0067">ATP-binding</keyword>
<keyword id="KW-0315">Glutamine amidotransferase</keyword>
<keyword id="KW-0436">Ligase</keyword>
<keyword id="KW-0460">Magnesium</keyword>
<keyword id="KW-0479">Metal-binding</keyword>
<keyword id="KW-0547">Nucleotide-binding</keyword>
<keyword id="KW-0665">Pyrimidine biosynthesis</keyword>
<gene>
    <name evidence="1" type="primary">pyrG</name>
    <name type="ordered locus">FTA_1386</name>
</gene>
<comment type="function">
    <text evidence="1">Catalyzes the ATP-dependent amination of UTP to CTP with either L-glutamine or ammonia as the source of nitrogen. Regulates intracellular CTP levels through interactions with the four ribonucleotide triphosphates.</text>
</comment>
<comment type="catalytic activity">
    <reaction evidence="1">
        <text>UTP + L-glutamine + ATP + H2O = CTP + L-glutamate + ADP + phosphate + 2 H(+)</text>
        <dbReference type="Rhea" id="RHEA:26426"/>
        <dbReference type="ChEBI" id="CHEBI:15377"/>
        <dbReference type="ChEBI" id="CHEBI:15378"/>
        <dbReference type="ChEBI" id="CHEBI:29985"/>
        <dbReference type="ChEBI" id="CHEBI:30616"/>
        <dbReference type="ChEBI" id="CHEBI:37563"/>
        <dbReference type="ChEBI" id="CHEBI:43474"/>
        <dbReference type="ChEBI" id="CHEBI:46398"/>
        <dbReference type="ChEBI" id="CHEBI:58359"/>
        <dbReference type="ChEBI" id="CHEBI:456216"/>
        <dbReference type="EC" id="6.3.4.2"/>
    </reaction>
</comment>
<comment type="catalytic activity">
    <reaction evidence="1">
        <text>L-glutamine + H2O = L-glutamate + NH4(+)</text>
        <dbReference type="Rhea" id="RHEA:15889"/>
        <dbReference type="ChEBI" id="CHEBI:15377"/>
        <dbReference type="ChEBI" id="CHEBI:28938"/>
        <dbReference type="ChEBI" id="CHEBI:29985"/>
        <dbReference type="ChEBI" id="CHEBI:58359"/>
    </reaction>
</comment>
<comment type="catalytic activity">
    <reaction evidence="1">
        <text>UTP + NH4(+) + ATP = CTP + ADP + phosphate + 2 H(+)</text>
        <dbReference type="Rhea" id="RHEA:16597"/>
        <dbReference type="ChEBI" id="CHEBI:15378"/>
        <dbReference type="ChEBI" id="CHEBI:28938"/>
        <dbReference type="ChEBI" id="CHEBI:30616"/>
        <dbReference type="ChEBI" id="CHEBI:37563"/>
        <dbReference type="ChEBI" id="CHEBI:43474"/>
        <dbReference type="ChEBI" id="CHEBI:46398"/>
        <dbReference type="ChEBI" id="CHEBI:456216"/>
    </reaction>
</comment>
<comment type="activity regulation">
    <text evidence="1">Allosterically activated by GTP, when glutamine is the substrate; GTP has no effect on the reaction when ammonia is the substrate. The allosteric effector GTP functions by stabilizing the protein conformation that binds the tetrahedral intermediate(s) formed during glutamine hydrolysis. Inhibited by the product CTP, via allosteric rather than competitive inhibition.</text>
</comment>
<comment type="pathway">
    <text evidence="1">Pyrimidine metabolism; CTP biosynthesis via de novo pathway; CTP from UDP: step 2/2.</text>
</comment>
<comment type="subunit">
    <text evidence="1">Homotetramer.</text>
</comment>
<comment type="miscellaneous">
    <text evidence="1">CTPSs have evolved a hybrid strategy for distinguishing between UTP and CTP. The overlapping regions of the product feedback inhibitory and substrate sites recognize a common feature in both compounds, the triphosphate moiety. To differentiate isosteric substrate and product pyrimidine rings, an additional pocket far from the expected kinase/ligase catalytic site, specifically recognizes the cytosine and ribose portions of the product inhibitor.</text>
</comment>
<comment type="similarity">
    <text evidence="1">Belongs to the CTP synthase family.</text>
</comment>
<proteinExistence type="inferred from homology"/>
<organism>
    <name type="scientific">Francisella tularensis subsp. holarctica (strain FTNF002-00 / FTA)</name>
    <dbReference type="NCBI Taxonomy" id="458234"/>
    <lineage>
        <taxon>Bacteria</taxon>
        <taxon>Pseudomonadati</taxon>
        <taxon>Pseudomonadota</taxon>
        <taxon>Gammaproteobacteria</taxon>
        <taxon>Thiotrichales</taxon>
        <taxon>Francisellaceae</taxon>
        <taxon>Francisella</taxon>
    </lineage>
</organism>
<evidence type="ECO:0000255" key="1">
    <source>
        <dbReference type="HAMAP-Rule" id="MF_01227"/>
    </source>
</evidence>